<proteinExistence type="inferred from homology"/>
<organism>
    <name type="scientific">Borreliella burgdorferi (strain ZS7)</name>
    <name type="common">Borrelia burgdorferi</name>
    <dbReference type="NCBI Taxonomy" id="445985"/>
    <lineage>
        <taxon>Bacteria</taxon>
        <taxon>Pseudomonadati</taxon>
        <taxon>Spirochaetota</taxon>
        <taxon>Spirochaetia</taxon>
        <taxon>Spirochaetales</taxon>
        <taxon>Borreliaceae</taxon>
        <taxon>Borreliella</taxon>
    </lineage>
</organism>
<evidence type="ECO:0000255" key="1">
    <source>
        <dbReference type="HAMAP-Rule" id="MF_01201"/>
    </source>
</evidence>
<keyword id="KW-0413">Isomerase</keyword>
<keyword id="KW-0663">Pyridoxal phosphate</keyword>
<dbReference type="EC" id="5.1.1.1" evidence="1"/>
<dbReference type="EMBL" id="CP001205">
    <property type="protein sequence ID" value="ACK74425.1"/>
    <property type="molecule type" value="Genomic_DNA"/>
</dbReference>
<dbReference type="RefSeq" id="WP_002658168.1">
    <property type="nucleotide sequence ID" value="NC_011728.1"/>
</dbReference>
<dbReference type="SMR" id="B7J192"/>
<dbReference type="GeneID" id="56568060"/>
<dbReference type="KEGG" id="bbz:BbuZS7_0159"/>
<dbReference type="HOGENOM" id="CLU_028393_2_2_12"/>
<dbReference type="UniPathway" id="UPA00042">
    <property type="reaction ID" value="UER00497"/>
</dbReference>
<dbReference type="Proteomes" id="UP000006901">
    <property type="component" value="Chromosome"/>
</dbReference>
<dbReference type="GO" id="GO:0005829">
    <property type="term" value="C:cytosol"/>
    <property type="evidence" value="ECO:0007669"/>
    <property type="project" value="TreeGrafter"/>
</dbReference>
<dbReference type="GO" id="GO:0008784">
    <property type="term" value="F:alanine racemase activity"/>
    <property type="evidence" value="ECO:0007669"/>
    <property type="project" value="UniProtKB-UniRule"/>
</dbReference>
<dbReference type="GO" id="GO:0030170">
    <property type="term" value="F:pyridoxal phosphate binding"/>
    <property type="evidence" value="ECO:0007669"/>
    <property type="project" value="UniProtKB-UniRule"/>
</dbReference>
<dbReference type="GO" id="GO:0030632">
    <property type="term" value="P:D-alanine biosynthetic process"/>
    <property type="evidence" value="ECO:0007669"/>
    <property type="project" value="UniProtKB-UniRule"/>
</dbReference>
<dbReference type="CDD" id="cd00430">
    <property type="entry name" value="PLPDE_III_AR"/>
    <property type="match status" value="1"/>
</dbReference>
<dbReference type="Gene3D" id="3.20.20.10">
    <property type="entry name" value="Alanine racemase"/>
    <property type="match status" value="1"/>
</dbReference>
<dbReference type="Gene3D" id="2.40.37.10">
    <property type="entry name" value="Lyase, Ornithine Decarboxylase, Chain A, domain 1"/>
    <property type="match status" value="1"/>
</dbReference>
<dbReference type="HAMAP" id="MF_01201">
    <property type="entry name" value="Ala_racemase"/>
    <property type="match status" value="1"/>
</dbReference>
<dbReference type="InterPro" id="IPR000821">
    <property type="entry name" value="Ala_racemase"/>
</dbReference>
<dbReference type="InterPro" id="IPR009006">
    <property type="entry name" value="Ala_racemase/Decarboxylase_C"/>
</dbReference>
<dbReference type="InterPro" id="IPR011079">
    <property type="entry name" value="Ala_racemase_C"/>
</dbReference>
<dbReference type="InterPro" id="IPR001608">
    <property type="entry name" value="Ala_racemase_N"/>
</dbReference>
<dbReference type="InterPro" id="IPR020622">
    <property type="entry name" value="Ala_racemase_pyridoxalP-BS"/>
</dbReference>
<dbReference type="InterPro" id="IPR029066">
    <property type="entry name" value="PLP-binding_barrel"/>
</dbReference>
<dbReference type="NCBIfam" id="TIGR00492">
    <property type="entry name" value="alr"/>
    <property type="match status" value="1"/>
</dbReference>
<dbReference type="PANTHER" id="PTHR30511">
    <property type="entry name" value="ALANINE RACEMASE"/>
    <property type="match status" value="1"/>
</dbReference>
<dbReference type="PANTHER" id="PTHR30511:SF0">
    <property type="entry name" value="ALANINE RACEMASE, CATABOLIC-RELATED"/>
    <property type="match status" value="1"/>
</dbReference>
<dbReference type="Pfam" id="PF00842">
    <property type="entry name" value="Ala_racemase_C"/>
    <property type="match status" value="1"/>
</dbReference>
<dbReference type="Pfam" id="PF01168">
    <property type="entry name" value="Ala_racemase_N"/>
    <property type="match status" value="1"/>
</dbReference>
<dbReference type="PRINTS" id="PR00992">
    <property type="entry name" value="ALARACEMASE"/>
</dbReference>
<dbReference type="SMART" id="SM01005">
    <property type="entry name" value="Ala_racemase_C"/>
    <property type="match status" value="1"/>
</dbReference>
<dbReference type="SUPFAM" id="SSF50621">
    <property type="entry name" value="Alanine racemase C-terminal domain-like"/>
    <property type="match status" value="1"/>
</dbReference>
<dbReference type="SUPFAM" id="SSF51419">
    <property type="entry name" value="PLP-binding barrel"/>
    <property type="match status" value="1"/>
</dbReference>
<dbReference type="PROSITE" id="PS00395">
    <property type="entry name" value="ALANINE_RACEMASE"/>
    <property type="match status" value="1"/>
</dbReference>
<accession>B7J192</accession>
<comment type="function">
    <text evidence="1">Catalyzes the interconversion of L-alanine and D-alanine. May also act on other amino acids.</text>
</comment>
<comment type="catalytic activity">
    <reaction evidence="1">
        <text>L-alanine = D-alanine</text>
        <dbReference type="Rhea" id="RHEA:20249"/>
        <dbReference type="ChEBI" id="CHEBI:57416"/>
        <dbReference type="ChEBI" id="CHEBI:57972"/>
        <dbReference type="EC" id="5.1.1.1"/>
    </reaction>
</comment>
<comment type="cofactor">
    <cofactor evidence="1">
        <name>pyridoxal 5'-phosphate</name>
        <dbReference type="ChEBI" id="CHEBI:597326"/>
    </cofactor>
</comment>
<comment type="pathway">
    <text evidence="1">Amino-acid biosynthesis; D-alanine biosynthesis; D-alanine from L-alanine: step 1/1.</text>
</comment>
<comment type="similarity">
    <text evidence="1">Belongs to the alanine racemase family.</text>
</comment>
<name>ALR_BORBZ</name>
<reference key="1">
    <citation type="journal article" date="2011" name="J. Bacteriol.">
        <title>Whole-genome sequences of thirteen isolates of Borrelia burgdorferi.</title>
        <authorList>
            <person name="Schutzer S.E."/>
            <person name="Fraser-Liggett C.M."/>
            <person name="Casjens S.R."/>
            <person name="Qiu W.G."/>
            <person name="Dunn J.J."/>
            <person name="Mongodin E.F."/>
            <person name="Luft B.J."/>
        </authorList>
    </citation>
    <scope>NUCLEOTIDE SEQUENCE [LARGE SCALE GENOMIC DNA]</scope>
    <source>
        <strain>ZS7</strain>
    </source>
</reference>
<feature type="chain" id="PRO_1000138581" description="Alanine racemase">
    <location>
        <begin position="1"/>
        <end position="372"/>
    </location>
</feature>
<feature type="active site" description="Proton acceptor; specific for D-alanine" evidence="1">
    <location>
        <position position="41"/>
    </location>
</feature>
<feature type="active site" description="Proton acceptor; specific for L-alanine" evidence="1">
    <location>
        <position position="268"/>
    </location>
</feature>
<feature type="binding site" evidence="1">
    <location>
        <position position="139"/>
    </location>
    <ligand>
        <name>substrate</name>
    </ligand>
</feature>
<feature type="binding site" evidence="1">
    <location>
        <position position="316"/>
    </location>
    <ligand>
        <name>substrate</name>
    </ligand>
</feature>
<feature type="modified residue" description="N6-(pyridoxal phosphate)lysine" evidence="1">
    <location>
        <position position="41"/>
    </location>
</feature>
<sequence length="372" mass="43086">MYNNKTMGSNKTIIINLNNLEHNLNLIKNKIGEKEIVATLKGDAYGHGLINIFKFLKSKNINYFGLSNIEDAKTLKKIDKNIKILMYIKVDKKEIKNLIKFELVPFVSDFEYLFLIEKECALQKNKIKVHLKIDIGMNRYGIKIDDALEIATYIQNSKFLELEGICSHLPSIENFKTTQKQIEQFLFFLETLKQKNIHPKFVHISNSGHIINYKLNPQFNMVRPGLILYGYCQSLKNKKPALNFKPVLSLFSKVIFIKNVKKGEKISYSGIFQAKEDMKIGIIPIGYFDGIPQNISNDFYFLINNKKCKIRGKVCMNLTIVEIPKDLKVKTGSKVEIVSEKLSIDEMSKFSKRSHYELLCNIGKYEKRKYLD</sequence>
<gene>
    <name type="primary">alr</name>
    <name type="ordered locus">BbuZS7_0159</name>
</gene>
<protein>
    <recommendedName>
        <fullName evidence="1">Alanine racemase</fullName>
        <ecNumber evidence="1">5.1.1.1</ecNumber>
    </recommendedName>
</protein>